<dbReference type="EC" id="2.1.2.3" evidence="1"/>
<dbReference type="EC" id="3.5.4.10" evidence="1"/>
<dbReference type="EMBL" id="CP000922">
    <property type="protein sequence ID" value="ACJ32622.1"/>
    <property type="molecule type" value="Genomic_DNA"/>
</dbReference>
<dbReference type="RefSeq" id="WP_012573961.1">
    <property type="nucleotide sequence ID" value="NC_011567.1"/>
</dbReference>
<dbReference type="SMR" id="B7GFU2"/>
<dbReference type="STRING" id="491915.Aflv_0238"/>
<dbReference type="GeneID" id="7036470"/>
<dbReference type="KEGG" id="afl:Aflv_0238"/>
<dbReference type="PATRIC" id="fig|491915.6.peg.244"/>
<dbReference type="eggNOG" id="COG0138">
    <property type="taxonomic scope" value="Bacteria"/>
</dbReference>
<dbReference type="HOGENOM" id="CLU_016316_5_2_9"/>
<dbReference type="UniPathway" id="UPA00074">
    <property type="reaction ID" value="UER00133"/>
</dbReference>
<dbReference type="UniPathway" id="UPA00074">
    <property type="reaction ID" value="UER00135"/>
</dbReference>
<dbReference type="Proteomes" id="UP000000742">
    <property type="component" value="Chromosome"/>
</dbReference>
<dbReference type="GO" id="GO:0005829">
    <property type="term" value="C:cytosol"/>
    <property type="evidence" value="ECO:0007669"/>
    <property type="project" value="TreeGrafter"/>
</dbReference>
<dbReference type="GO" id="GO:0003937">
    <property type="term" value="F:IMP cyclohydrolase activity"/>
    <property type="evidence" value="ECO:0007669"/>
    <property type="project" value="UniProtKB-UniRule"/>
</dbReference>
<dbReference type="GO" id="GO:0004643">
    <property type="term" value="F:phosphoribosylaminoimidazolecarboxamide formyltransferase activity"/>
    <property type="evidence" value="ECO:0007669"/>
    <property type="project" value="UniProtKB-UniRule"/>
</dbReference>
<dbReference type="GO" id="GO:0006189">
    <property type="term" value="P:'de novo' IMP biosynthetic process"/>
    <property type="evidence" value="ECO:0007669"/>
    <property type="project" value="UniProtKB-UniRule"/>
</dbReference>
<dbReference type="CDD" id="cd01421">
    <property type="entry name" value="IMPCH"/>
    <property type="match status" value="1"/>
</dbReference>
<dbReference type="FunFam" id="3.40.140.20:FF:000001">
    <property type="entry name" value="Bifunctional purine biosynthesis protein PurH"/>
    <property type="match status" value="1"/>
</dbReference>
<dbReference type="FunFam" id="3.40.140.20:FF:000002">
    <property type="entry name" value="Bifunctional purine biosynthesis protein PurH"/>
    <property type="match status" value="1"/>
</dbReference>
<dbReference type="FunFam" id="3.40.50.1380:FF:000001">
    <property type="entry name" value="Bifunctional purine biosynthesis protein PurH"/>
    <property type="match status" value="1"/>
</dbReference>
<dbReference type="Gene3D" id="3.40.140.20">
    <property type="match status" value="2"/>
</dbReference>
<dbReference type="Gene3D" id="3.40.50.1380">
    <property type="entry name" value="Methylglyoxal synthase-like domain"/>
    <property type="match status" value="1"/>
</dbReference>
<dbReference type="HAMAP" id="MF_00139">
    <property type="entry name" value="PurH"/>
    <property type="match status" value="1"/>
</dbReference>
<dbReference type="InterPro" id="IPR024051">
    <property type="entry name" value="AICAR_Tfase_dup_dom_sf"/>
</dbReference>
<dbReference type="InterPro" id="IPR016193">
    <property type="entry name" value="Cytidine_deaminase-like"/>
</dbReference>
<dbReference type="InterPro" id="IPR011607">
    <property type="entry name" value="MGS-like_dom"/>
</dbReference>
<dbReference type="InterPro" id="IPR036914">
    <property type="entry name" value="MGS-like_dom_sf"/>
</dbReference>
<dbReference type="InterPro" id="IPR002695">
    <property type="entry name" value="PurH-like"/>
</dbReference>
<dbReference type="NCBIfam" id="NF002049">
    <property type="entry name" value="PRK00881.1"/>
    <property type="match status" value="1"/>
</dbReference>
<dbReference type="NCBIfam" id="TIGR00355">
    <property type="entry name" value="purH"/>
    <property type="match status" value="1"/>
</dbReference>
<dbReference type="PANTHER" id="PTHR11692:SF0">
    <property type="entry name" value="BIFUNCTIONAL PURINE BIOSYNTHESIS PROTEIN ATIC"/>
    <property type="match status" value="1"/>
</dbReference>
<dbReference type="PANTHER" id="PTHR11692">
    <property type="entry name" value="BIFUNCTIONAL PURINE BIOSYNTHESIS PROTEIN PURH"/>
    <property type="match status" value="1"/>
</dbReference>
<dbReference type="Pfam" id="PF01808">
    <property type="entry name" value="AICARFT_IMPCHas"/>
    <property type="match status" value="1"/>
</dbReference>
<dbReference type="Pfam" id="PF02142">
    <property type="entry name" value="MGS"/>
    <property type="match status" value="1"/>
</dbReference>
<dbReference type="PIRSF" id="PIRSF000414">
    <property type="entry name" value="AICARFT_IMPCHas"/>
    <property type="match status" value="1"/>
</dbReference>
<dbReference type="SMART" id="SM00798">
    <property type="entry name" value="AICARFT_IMPCHas"/>
    <property type="match status" value="1"/>
</dbReference>
<dbReference type="SMART" id="SM00851">
    <property type="entry name" value="MGS"/>
    <property type="match status" value="1"/>
</dbReference>
<dbReference type="SUPFAM" id="SSF53927">
    <property type="entry name" value="Cytidine deaminase-like"/>
    <property type="match status" value="1"/>
</dbReference>
<dbReference type="SUPFAM" id="SSF52335">
    <property type="entry name" value="Methylglyoxal synthase-like"/>
    <property type="match status" value="1"/>
</dbReference>
<dbReference type="PROSITE" id="PS51855">
    <property type="entry name" value="MGS"/>
    <property type="match status" value="1"/>
</dbReference>
<feature type="chain" id="PRO_1000117863" description="Bifunctional purine biosynthesis protein PurH">
    <location>
        <begin position="1"/>
        <end position="511"/>
    </location>
</feature>
<feature type="domain" description="MGS-like" evidence="2">
    <location>
        <begin position="1"/>
        <end position="145"/>
    </location>
</feature>
<gene>
    <name evidence="1" type="primary">purH</name>
    <name type="ordered locus">Aflv_0238</name>
</gene>
<proteinExistence type="inferred from homology"/>
<sequence>MKRRAIISVSNKKGIVTFAKQLAELGVEIISTGGTKRVLAEHGVPVISISDVTNFPEILDGRVKTLHPNIHGGLLAVRDDETHQQQLQAHNITPIDFVVVNLYPFQETIAKPNVTLMEAIEQIDIGGPTMLRAAAKNHAYVTAVVDPADYHLVIEQLKQYGEVLLETRRALAAKVFRHTAAYDAMIAQYLTNIVGETYPETMTMTFVKKQSLRYGENPHQTAAFYEKPLSSPFSIAAAKQLHGKELSYNNINDANAALQIVAEFVEPAAVAVKHMNPCGVGVGETIAEAFQKAYEADPTSIFGGIVALNREVDEQMAAKLHDIFLEIVIAPSFTEQALEILTRKKNIRLLTVDFEVERKKEPFVVSVRGGLLVQDEDTYTIDDATLRVVTERKPTEEEWSNLTFAWRVVKHVKSNAIVLAKNGMTIGVGAGQMNRVGAAKIAIEQAGDRAKGAVLASDAFFPMSDTVEAAAQAGVTAIIQPGGSIRDEDSIQKANEYGIAMVFTGVRHFKH</sequence>
<accession>B7GFU2</accession>
<name>PUR9_ANOFW</name>
<comment type="catalytic activity">
    <reaction evidence="1">
        <text>(6R)-10-formyltetrahydrofolate + 5-amino-1-(5-phospho-beta-D-ribosyl)imidazole-4-carboxamide = 5-formamido-1-(5-phospho-D-ribosyl)imidazole-4-carboxamide + (6S)-5,6,7,8-tetrahydrofolate</text>
        <dbReference type="Rhea" id="RHEA:22192"/>
        <dbReference type="ChEBI" id="CHEBI:57453"/>
        <dbReference type="ChEBI" id="CHEBI:58467"/>
        <dbReference type="ChEBI" id="CHEBI:58475"/>
        <dbReference type="ChEBI" id="CHEBI:195366"/>
        <dbReference type="EC" id="2.1.2.3"/>
    </reaction>
</comment>
<comment type="catalytic activity">
    <reaction evidence="1">
        <text>IMP + H2O = 5-formamido-1-(5-phospho-D-ribosyl)imidazole-4-carboxamide</text>
        <dbReference type="Rhea" id="RHEA:18445"/>
        <dbReference type="ChEBI" id="CHEBI:15377"/>
        <dbReference type="ChEBI" id="CHEBI:58053"/>
        <dbReference type="ChEBI" id="CHEBI:58467"/>
        <dbReference type="EC" id="3.5.4.10"/>
    </reaction>
</comment>
<comment type="pathway">
    <text evidence="1">Purine metabolism; IMP biosynthesis via de novo pathway; 5-formamido-1-(5-phospho-D-ribosyl)imidazole-4-carboxamide from 5-amino-1-(5-phospho-D-ribosyl)imidazole-4-carboxamide (10-formyl THF route): step 1/1.</text>
</comment>
<comment type="pathway">
    <text evidence="1">Purine metabolism; IMP biosynthesis via de novo pathway; IMP from 5-formamido-1-(5-phospho-D-ribosyl)imidazole-4-carboxamide: step 1/1.</text>
</comment>
<comment type="domain">
    <text evidence="1">The IMP cyclohydrolase activity resides in the N-terminal region.</text>
</comment>
<comment type="similarity">
    <text evidence="1">Belongs to the PurH family.</text>
</comment>
<keyword id="KW-0378">Hydrolase</keyword>
<keyword id="KW-0511">Multifunctional enzyme</keyword>
<keyword id="KW-0658">Purine biosynthesis</keyword>
<keyword id="KW-0808">Transferase</keyword>
<protein>
    <recommendedName>
        <fullName evidence="1">Bifunctional purine biosynthesis protein PurH</fullName>
    </recommendedName>
    <domain>
        <recommendedName>
            <fullName evidence="1">Phosphoribosylaminoimidazolecarboxamide formyltransferase</fullName>
            <ecNumber evidence="1">2.1.2.3</ecNumber>
        </recommendedName>
        <alternativeName>
            <fullName evidence="1">AICAR transformylase</fullName>
        </alternativeName>
    </domain>
    <domain>
        <recommendedName>
            <fullName evidence="1">IMP cyclohydrolase</fullName>
            <ecNumber evidence="1">3.5.4.10</ecNumber>
        </recommendedName>
        <alternativeName>
            <fullName evidence="1">ATIC</fullName>
        </alternativeName>
        <alternativeName>
            <fullName evidence="1">IMP synthase</fullName>
        </alternativeName>
        <alternativeName>
            <fullName evidence="1">Inosinicase</fullName>
        </alternativeName>
    </domain>
</protein>
<evidence type="ECO:0000255" key="1">
    <source>
        <dbReference type="HAMAP-Rule" id="MF_00139"/>
    </source>
</evidence>
<evidence type="ECO:0000255" key="2">
    <source>
        <dbReference type="PROSITE-ProRule" id="PRU01202"/>
    </source>
</evidence>
<organism>
    <name type="scientific">Anoxybacillus flavithermus (strain DSM 21510 / WK1)</name>
    <dbReference type="NCBI Taxonomy" id="491915"/>
    <lineage>
        <taxon>Bacteria</taxon>
        <taxon>Bacillati</taxon>
        <taxon>Bacillota</taxon>
        <taxon>Bacilli</taxon>
        <taxon>Bacillales</taxon>
        <taxon>Anoxybacillaceae</taxon>
        <taxon>Anoxybacillus</taxon>
    </lineage>
</organism>
<reference key="1">
    <citation type="journal article" date="2008" name="Genome Biol.">
        <title>Encapsulated in silica: genome, proteome and physiology of the thermophilic bacterium Anoxybacillus flavithermus WK1.</title>
        <authorList>
            <person name="Saw J.H."/>
            <person name="Mountain B.W."/>
            <person name="Feng L."/>
            <person name="Omelchenko M.V."/>
            <person name="Hou S."/>
            <person name="Saito J.A."/>
            <person name="Stott M.B."/>
            <person name="Li D."/>
            <person name="Zhao G."/>
            <person name="Wu J."/>
            <person name="Galperin M.Y."/>
            <person name="Koonin E.V."/>
            <person name="Makarova K.S."/>
            <person name="Wolf Y.I."/>
            <person name="Rigden D.J."/>
            <person name="Dunfield P.F."/>
            <person name="Wang L."/>
            <person name="Alam M."/>
        </authorList>
    </citation>
    <scope>NUCLEOTIDE SEQUENCE [LARGE SCALE GENOMIC DNA]</scope>
    <source>
        <strain>DSM 21510 / WK1</strain>
    </source>
</reference>